<gene>
    <name evidence="2" type="primary">ddl</name>
    <name type="ordered locus">BH11210</name>
</gene>
<accession>Q6G2Q8</accession>
<feature type="chain" id="PRO_1000030429" description="D-alanine--D-alanine ligase">
    <location>
        <begin position="1"/>
        <end position="306"/>
    </location>
</feature>
<feature type="domain" description="ATP-grasp" evidence="2">
    <location>
        <begin position="102"/>
        <end position="300"/>
    </location>
</feature>
<feature type="binding site" evidence="2">
    <location>
        <begin position="128"/>
        <end position="183"/>
    </location>
    <ligand>
        <name>ATP</name>
        <dbReference type="ChEBI" id="CHEBI:30616"/>
    </ligand>
</feature>
<feature type="binding site" evidence="2">
    <location>
        <position position="253"/>
    </location>
    <ligand>
        <name>Mg(2+)</name>
        <dbReference type="ChEBI" id="CHEBI:18420"/>
        <label>1</label>
    </ligand>
</feature>
<feature type="binding site" evidence="2">
    <location>
        <position position="267"/>
    </location>
    <ligand>
        <name>Mg(2+)</name>
        <dbReference type="ChEBI" id="CHEBI:18420"/>
        <label>1</label>
    </ligand>
</feature>
<feature type="binding site" evidence="2">
    <location>
        <position position="267"/>
    </location>
    <ligand>
        <name>Mg(2+)</name>
        <dbReference type="ChEBI" id="CHEBI:18420"/>
        <label>2</label>
    </ligand>
</feature>
<feature type="binding site" evidence="2">
    <location>
        <position position="269"/>
    </location>
    <ligand>
        <name>Mg(2+)</name>
        <dbReference type="ChEBI" id="CHEBI:18420"/>
        <label>2</label>
    </ligand>
</feature>
<proteinExistence type="inferred from homology"/>
<evidence type="ECO:0000250" key="1"/>
<evidence type="ECO:0000255" key="2">
    <source>
        <dbReference type="HAMAP-Rule" id="MF_00047"/>
    </source>
</evidence>
<comment type="function">
    <text evidence="2">Cell wall formation.</text>
</comment>
<comment type="catalytic activity">
    <reaction evidence="2">
        <text>2 D-alanine + ATP = D-alanyl-D-alanine + ADP + phosphate + H(+)</text>
        <dbReference type="Rhea" id="RHEA:11224"/>
        <dbReference type="ChEBI" id="CHEBI:15378"/>
        <dbReference type="ChEBI" id="CHEBI:30616"/>
        <dbReference type="ChEBI" id="CHEBI:43474"/>
        <dbReference type="ChEBI" id="CHEBI:57416"/>
        <dbReference type="ChEBI" id="CHEBI:57822"/>
        <dbReference type="ChEBI" id="CHEBI:456216"/>
        <dbReference type="EC" id="6.3.2.4"/>
    </reaction>
</comment>
<comment type="cofactor">
    <cofactor evidence="1">
        <name>Mg(2+)</name>
        <dbReference type="ChEBI" id="CHEBI:18420"/>
    </cofactor>
    <cofactor evidence="1">
        <name>Mn(2+)</name>
        <dbReference type="ChEBI" id="CHEBI:29035"/>
    </cofactor>
    <text evidence="1">Binds 2 magnesium or manganese ions per subunit.</text>
</comment>
<comment type="pathway">
    <text evidence="2">Cell wall biogenesis; peptidoglycan biosynthesis.</text>
</comment>
<comment type="subcellular location">
    <subcellularLocation>
        <location evidence="2">Cytoplasm</location>
    </subcellularLocation>
</comment>
<comment type="similarity">
    <text evidence="2">Belongs to the D-alanine--D-alanine ligase family.</text>
</comment>
<keyword id="KW-0067">ATP-binding</keyword>
<keyword id="KW-0133">Cell shape</keyword>
<keyword id="KW-0961">Cell wall biogenesis/degradation</keyword>
<keyword id="KW-0963">Cytoplasm</keyword>
<keyword id="KW-0436">Ligase</keyword>
<keyword id="KW-0460">Magnesium</keyword>
<keyword id="KW-0464">Manganese</keyword>
<keyword id="KW-0479">Metal-binding</keyword>
<keyword id="KW-0547">Nucleotide-binding</keyword>
<keyword id="KW-0573">Peptidoglycan synthesis</keyword>
<dbReference type="EC" id="6.3.2.4" evidence="2"/>
<dbReference type="EMBL" id="BX897699">
    <property type="protein sequence ID" value="CAF27906.1"/>
    <property type="molecule type" value="Genomic_DNA"/>
</dbReference>
<dbReference type="RefSeq" id="WP_011180969.1">
    <property type="nucleotide sequence ID" value="NC_005956.1"/>
</dbReference>
<dbReference type="SMR" id="Q6G2Q8"/>
<dbReference type="PaxDb" id="283166-BH11210"/>
<dbReference type="EnsemblBacteria" id="CAF27906">
    <property type="protein sequence ID" value="CAF27906"/>
    <property type="gene ID" value="BH11210"/>
</dbReference>
<dbReference type="GeneID" id="92985735"/>
<dbReference type="KEGG" id="bhe:BH11210"/>
<dbReference type="eggNOG" id="COG1181">
    <property type="taxonomic scope" value="Bacteria"/>
</dbReference>
<dbReference type="OrthoDB" id="9813261at2"/>
<dbReference type="UniPathway" id="UPA00219"/>
<dbReference type="Proteomes" id="UP000000421">
    <property type="component" value="Chromosome"/>
</dbReference>
<dbReference type="GO" id="GO:0005737">
    <property type="term" value="C:cytoplasm"/>
    <property type="evidence" value="ECO:0007669"/>
    <property type="project" value="UniProtKB-SubCell"/>
</dbReference>
<dbReference type="GO" id="GO:0005524">
    <property type="term" value="F:ATP binding"/>
    <property type="evidence" value="ECO:0007669"/>
    <property type="project" value="UniProtKB-KW"/>
</dbReference>
<dbReference type="GO" id="GO:0008716">
    <property type="term" value="F:D-alanine-D-alanine ligase activity"/>
    <property type="evidence" value="ECO:0007669"/>
    <property type="project" value="UniProtKB-UniRule"/>
</dbReference>
<dbReference type="GO" id="GO:0046872">
    <property type="term" value="F:metal ion binding"/>
    <property type="evidence" value="ECO:0007669"/>
    <property type="project" value="UniProtKB-KW"/>
</dbReference>
<dbReference type="GO" id="GO:0071555">
    <property type="term" value="P:cell wall organization"/>
    <property type="evidence" value="ECO:0007669"/>
    <property type="project" value="UniProtKB-KW"/>
</dbReference>
<dbReference type="GO" id="GO:0009252">
    <property type="term" value="P:peptidoglycan biosynthetic process"/>
    <property type="evidence" value="ECO:0007669"/>
    <property type="project" value="UniProtKB-UniRule"/>
</dbReference>
<dbReference type="GO" id="GO:0008360">
    <property type="term" value="P:regulation of cell shape"/>
    <property type="evidence" value="ECO:0007669"/>
    <property type="project" value="UniProtKB-KW"/>
</dbReference>
<dbReference type="Gene3D" id="3.40.50.20">
    <property type="match status" value="1"/>
</dbReference>
<dbReference type="Gene3D" id="3.30.1490.20">
    <property type="entry name" value="ATP-grasp fold, A domain"/>
    <property type="match status" value="1"/>
</dbReference>
<dbReference type="Gene3D" id="3.30.470.20">
    <property type="entry name" value="ATP-grasp fold, B domain"/>
    <property type="match status" value="1"/>
</dbReference>
<dbReference type="HAMAP" id="MF_00047">
    <property type="entry name" value="Dala_Dala_lig"/>
    <property type="match status" value="1"/>
</dbReference>
<dbReference type="InterPro" id="IPR011761">
    <property type="entry name" value="ATP-grasp"/>
</dbReference>
<dbReference type="InterPro" id="IPR013815">
    <property type="entry name" value="ATP_grasp_subdomain_1"/>
</dbReference>
<dbReference type="InterPro" id="IPR000291">
    <property type="entry name" value="D-Ala_lig_Van_CS"/>
</dbReference>
<dbReference type="InterPro" id="IPR005905">
    <property type="entry name" value="D_ala_D_ala"/>
</dbReference>
<dbReference type="InterPro" id="IPR011095">
    <property type="entry name" value="Dala_Dala_lig_C"/>
</dbReference>
<dbReference type="InterPro" id="IPR011127">
    <property type="entry name" value="Dala_Dala_lig_N"/>
</dbReference>
<dbReference type="InterPro" id="IPR016185">
    <property type="entry name" value="PreATP-grasp_dom_sf"/>
</dbReference>
<dbReference type="NCBIfam" id="TIGR01205">
    <property type="entry name" value="D_ala_D_alaTIGR"/>
    <property type="match status" value="1"/>
</dbReference>
<dbReference type="NCBIfam" id="NF002378">
    <property type="entry name" value="PRK01372.1"/>
    <property type="match status" value="1"/>
</dbReference>
<dbReference type="PANTHER" id="PTHR23132">
    <property type="entry name" value="D-ALANINE--D-ALANINE LIGASE"/>
    <property type="match status" value="1"/>
</dbReference>
<dbReference type="PANTHER" id="PTHR23132:SF23">
    <property type="entry name" value="D-ALANINE--D-ALANINE LIGASE B"/>
    <property type="match status" value="1"/>
</dbReference>
<dbReference type="Pfam" id="PF07478">
    <property type="entry name" value="Dala_Dala_lig_C"/>
    <property type="match status" value="1"/>
</dbReference>
<dbReference type="Pfam" id="PF01820">
    <property type="entry name" value="Dala_Dala_lig_N"/>
    <property type="match status" value="1"/>
</dbReference>
<dbReference type="PIRSF" id="PIRSF039102">
    <property type="entry name" value="Ddl/VanB"/>
    <property type="match status" value="1"/>
</dbReference>
<dbReference type="SUPFAM" id="SSF56059">
    <property type="entry name" value="Glutathione synthetase ATP-binding domain-like"/>
    <property type="match status" value="1"/>
</dbReference>
<dbReference type="SUPFAM" id="SSF52440">
    <property type="entry name" value="PreATP-grasp domain"/>
    <property type="match status" value="1"/>
</dbReference>
<dbReference type="PROSITE" id="PS50975">
    <property type="entry name" value="ATP_GRASP"/>
    <property type="match status" value="1"/>
</dbReference>
<dbReference type="PROSITE" id="PS00843">
    <property type="entry name" value="DALA_DALA_LIGASE_1"/>
    <property type="match status" value="1"/>
</dbReference>
<dbReference type="PROSITE" id="PS00844">
    <property type="entry name" value="DALA_DALA_LIGASE_2"/>
    <property type="match status" value="1"/>
</dbReference>
<name>DDL_BARHE</name>
<sequence>MKDEHIAVLMGGFSSERSVSLSSGTACADVLEAQGYRVSRVDVDGHIASVLEQLQPDIAFNALHGPFGEDGRIQGVLEYLKIPYTHSGVMASALAMDKGRAKIVVASVGVSIAPSCVMSRFAVGKEHPMEPPYVIKPVCEGSSLGVIIVKENESVPSLNVVGSEWVYADTVIVEKYIPGRELTCAVMGNKALDVCEILPEKHFQFYDYDSKYKSGGSLHVCPAQLSSNIYQNVQRMSLAAHQAIGCRGVSRSDFRFDEETGELVWLEINTQPGMTPTSLFPDIAKASGRTYGDIVQWMVEDASCMR</sequence>
<protein>
    <recommendedName>
        <fullName evidence="2">D-alanine--D-alanine ligase</fullName>
        <ecNumber evidence="2">6.3.2.4</ecNumber>
    </recommendedName>
    <alternativeName>
        <fullName evidence="2">D-Ala-D-Ala ligase</fullName>
    </alternativeName>
    <alternativeName>
        <fullName evidence="2">D-alanylalanine synthetase</fullName>
    </alternativeName>
</protein>
<organism>
    <name type="scientific">Bartonella henselae (strain ATCC 49882 / DSM 28221 / CCUG 30454 / Houston 1)</name>
    <name type="common">Rochalimaea henselae</name>
    <dbReference type="NCBI Taxonomy" id="283166"/>
    <lineage>
        <taxon>Bacteria</taxon>
        <taxon>Pseudomonadati</taxon>
        <taxon>Pseudomonadota</taxon>
        <taxon>Alphaproteobacteria</taxon>
        <taxon>Hyphomicrobiales</taxon>
        <taxon>Bartonellaceae</taxon>
        <taxon>Bartonella</taxon>
    </lineage>
</organism>
<reference key="1">
    <citation type="journal article" date="2004" name="Proc. Natl. Acad. Sci. U.S.A.">
        <title>The louse-borne human pathogen Bartonella quintana is a genomic derivative of the zoonotic agent Bartonella henselae.</title>
        <authorList>
            <person name="Alsmark U.C.M."/>
            <person name="Frank A.C."/>
            <person name="Karlberg E.O."/>
            <person name="Legault B.-A."/>
            <person name="Ardell D.H."/>
            <person name="Canbaeck B."/>
            <person name="Eriksson A.-S."/>
            <person name="Naeslund A.K."/>
            <person name="Handley S.A."/>
            <person name="Huvet M."/>
            <person name="La Scola B."/>
            <person name="Holmberg M."/>
            <person name="Andersson S.G.E."/>
        </authorList>
    </citation>
    <scope>NUCLEOTIDE SEQUENCE [LARGE SCALE GENOMIC DNA]</scope>
    <source>
        <strain>ATCC 49882 / DSM 28221 / CCUG 30454 / Houston 1</strain>
    </source>
</reference>